<sequence length="401" mass="44758">MEKKKVVLAYSGGLDTSVAIKWLQEKNYDIIALCLDLGEGKDLAFVKEKALSVGAIKSYMIDVQEEFANEYALMAMQAHTLYEGKYPLVSALSRPLIAKKLVEIAEQEGATAVAHGCTGKGNDQVRFEVSIQALNPYLEVIAPVREWKWSREEEIAYAKENDVPIPINLDSPFSIDQNLWGRSNECGILEDPWAAPPEDAYEMTLALEDTPNKPEFVEIGFEAGVPTTLNGTAYPLSELIKTLNAFAGKHGVGRIDHVENRLVGIKSREVYECPAAMTLITAHKELEDLTLVKEVAHFKPMIEQKITELIYNGLWFSPLKQALHAFLQETQKNVTGMVRVKLFKGHAIVEGRKSEYSLYDEKLATYTAQDEFNHDAAVGFISLFGLPTKVYSQVNQKKVEA</sequence>
<keyword id="KW-0028">Amino-acid biosynthesis</keyword>
<keyword id="KW-0055">Arginine biosynthesis</keyword>
<keyword id="KW-0067">ATP-binding</keyword>
<keyword id="KW-0963">Cytoplasm</keyword>
<keyword id="KW-0436">Ligase</keyword>
<keyword id="KW-0547">Nucleotide-binding</keyword>
<gene>
    <name evidence="1" type="primary">argG</name>
    <name type="ordered locus">BCAH187_A4764</name>
</gene>
<organism>
    <name type="scientific">Bacillus cereus (strain AH187)</name>
    <dbReference type="NCBI Taxonomy" id="405534"/>
    <lineage>
        <taxon>Bacteria</taxon>
        <taxon>Bacillati</taxon>
        <taxon>Bacillota</taxon>
        <taxon>Bacilli</taxon>
        <taxon>Bacillales</taxon>
        <taxon>Bacillaceae</taxon>
        <taxon>Bacillus</taxon>
        <taxon>Bacillus cereus group</taxon>
    </lineage>
</organism>
<evidence type="ECO:0000255" key="1">
    <source>
        <dbReference type="HAMAP-Rule" id="MF_00005"/>
    </source>
</evidence>
<dbReference type="EC" id="6.3.4.5" evidence="1"/>
<dbReference type="EMBL" id="CP001177">
    <property type="protein sequence ID" value="ACJ80822.1"/>
    <property type="molecule type" value="Genomic_DNA"/>
</dbReference>
<dbReference type="SMR" id="B7HRS7"/>
<dbReference type="KEGG" id="bcr:BCAH187_A4764"/>
<dbReference type="HOGENOM" id="CLU_032784_4_2_9"/>
<dbReference type="UniPathway" id="UPA00068">
    <property type="reaction ID" value="UER00113"/>
</dbReference>
<dbReference type="Proteomes" id="UP000002214">
    <property type="component" value="Chromosome"/>
</dbReference>
<dbReference type="GO" id="GO:0005737">
    <property type="term" value="C:cytoplasm"/>
    <property type="evidence" value="ECO:0007669"/>
    <property type="project" value="UniProtKB-SubCell"/>
</dbReference>
<dbReference type="GO" id="GO:0004055">
    <property type="term" value="F:argininosuccinate synthase activity"/>
    <property type="evidence" value="ECO:0007669"/>
    <property type="project" value="UniProtKB-UniRule"/>
</dbReference>
<dbReference type="GO" id="GO:0005524">
    <property type="term" value="F:ATP binding"/>
    <property type="evidence" value="ECO:0007669"/>
    <property type="project" value="UniProtKB-UniRule"/>
</dbReference>
<dbReference type="GO" id="GO:0000053">
    <property type="term" value="P:argininosuccinate metabolic process"/>
    <property type="evidence" value="ECO:0007669"/>
    <property type="project" value="TreeGrafter"/>
</dbReference>
<dbReference type="GO" id="GO:0006526">
    <property type="term" value="P:L-arginine biosynthetic process"/>
    <property type="evidence" value="ECO:0007669"/>
    <property type="project" value="UniProtKB-UniRule"/>
</dbReference>
<dbReference type="GO" id="GO:0000050">
    <property type="term" value="P:urea cycle"/>
    <property type="evidence" value="ECO:0007669"/>
    <property type="project" value="TreeGrafter"/>
</dbReference>
<dbReference type="CDD" id="cd01999">
    <property type="entry name" value="ASS"/>
    <property type="match status" value="1"/>
</dbReference>
<dbReference type="FunFam" id="1.20.5.470:FF:000002">
    <property type="entry name" value="Argininosuccinate synthase"/>
    <property type="match status" value="1"/>
</dbReference>
<dbReference type="FunFam" id="3.40.50.620:FF:000038">
    <property type="entry name" value="Argininosuccinate synthase"/>
    <property type="match status" value="1"/>
</dbReference>
<dbReference type="FunFam" id="3.90.1260.10:FF:000007">
    <property type="entry name" value="Argininosuccinate synthase"/>
    <property type="match status" value="1"/>
</dbReference>
<dbReference type="Gene3D" id="3.90.1260.10">
    <property type="entry name" value="Argininosuccinate synthetase, chain A, domain 2"/>
    <property type="match status" value="1"/>
</dbReference>
<dbReference type="Gene3D" id="3.40.50.620">
    <property type="entry name" value="HUPs"/>
    <property type="match status" value="1"/>
</dbReference>
<dbReference type="Gene3D" id="1.20.5.470">
    <property type="entry name" value="Single helix bin"/>
    <property type="match status" value="1"/>
</dbReference>
<dbReference type="HAMAP" id="MF_00005">
    <property type="entry name" value="Arg_succ_synth_type1"/>
    <property type="match status" value="1"/>
</dbReference>
<dbReference type="InterPro" id="IPR048268">
    <property type="entry name" value="Arginosuc_syn_C"/>
</dbReference>
<dbReference type="InterPro" id="IPR048267">
    <property type="entry name" value="Arginosuc_syn_N"/>
</dbReference>
<dbReference type="InterPro" id="IPR001518">
    <property type="entry name" value="Arginosuc_synth"/>
</dbReference>
<dbReference type="InterPro" id="IPR018223">
    <property type="entry name" value="Arginosuc_synth_CS"/>
</dbReference>
<dbReference type="InterPro" id="IPR023434">
    <property type="entry name" value="Arginosuc_synth_type_1_subfam"/>
</dbReference>
<dbReference type="InterPro" id="IPR024074">
    <property type="entry name" value="AS_cat/multimer_dom_body"/>
</dbReference>
<dbReference type="InterPro" id="IPR014729">
    <property type="entry name" value="Rossmann-like_a/b/a_fold"/>
</dbReference>
<dbReference type="NCBIfam" id="TIGR00032">
    <property type="entry name" value="argG"/>
    <property type="match status" value="1"/>
</dbReference>
<dbReference type="NCBIfam" id="NF001770">
    <property type="entry name" value="PRK00509.1"/>
    <property type="match status" value="1"/>
</dbReference>
<dbReference type="PANTHER" id="PTHR11587">
    <property type="entry name" value="ARGININOSUCCINATE SYNTHASE"/>
    <property type="match status" value="1"/>
</dbReference>
<dbReference type="PANTHER" id="PTHR11587:SF2">
    <property type="entry name" value="ARGININOSUCCINATE SYNTHASE"/>
    <property type="match status" value="1"/>
</dbReference>
<dbReference type="Pfam" id="PF20979">
    <property type="entry name" value="Arginosuc_syn_C"/>
    <property type="match status" value="1"/>
</dbReference>
<dbReference type="Pfam" id="PF00764">
    <property type="entry name" value="Arginosuc_synth"/>
    <property type="match status" value="1"/>
</dbReference>
<dbReference type="SUPFAM" id="SSF52402">
    <property type="entry name" value="Adenine nucleotide alpha hydrolases-like"/>
    <property type="match status" value="1"/>
</dbReference>
<dbReference type="SUPFAM" id="SSF69864">
    <property type="entry name" value="Argininosuccinate synthetase, C-terminal domain"/>
    <property type="match status" value="1"/>
</dbReference>
<dbReference type="PROSITE" id="PS00564">
    <property type="entry name" value="ARGININOSUCCIN_SYN_1"/>
    <property type="match status" value="1"/>
</dbReference>
<dbReference type="PROSITE" id="PS00565">
    <property type="entry name" value="ARGININOSUCCIN_SYN_2"/>
    <property type="match status" value="1"/>
</dbReference>
<accession>B7HRS7</accession>
<proteinExistence type="inferred from homology"/>
<comment type="catalytic activity">
    <reaction evidence="1">
        <text>L-citrulline + L-aspartate + ATP = 2-(N(omega)-L-arginino)succinate + AMP + diphosphate + H(+)</text>
        <dbReference type="Rhea" id="RHEA:10932"/>
        <dbReference type="ChEBI" id="CHEBI:15378"/>
        <dbReference type="ChEBI" id="CHEBI:29991"/>
        <dbReference type="ChEBI" id="CHEBI:30616"/>
        <dbReference type="ChEBI" id="CHEBI:33019"/>
        <dbReference type="ChEBI" id="CHEBI:57472"/>
        <dbReference type="ChEBI" id="CHEBI:57743"/>
        <dbReference type="ChEBI" id="CHEBI:456215"/>
        <dbReference type="EC" id="6.3.4.5"/>
    </reaction>
</comment>
<comment type="pathway">
    <text evidence="1">Amino-acid biosynthesis; L-arginine biosynthesis; L-arginine from L-ornithine and carbamoyl phosphate: step 2/3.</text>
</comment>
<comment type="subunit">
    <text evidence="1">Homotetramer.</text>
</comment>
<comment type="subcellular location">
    <subcellularLocation>
        <location evidence="1">Cytoplasm</location>
    </subcellularLocation>
</comment>
<comment type="similarity">
    <text evidence="1">Belongs to the argininosuccinate synthase family. Type 1 subfamily.</text>
</comment>
<protein>
    <recommendedName>
        <fullName evidence="1">Argininosuccinate synthase</fullName>
        <ecNumber evidence="1">6.3.4.5</ecNumber>
    </recommendedName>
    <alternativeName>
        <fullName evidence="1">Citrulline--aspartate ligase</fullName>
    </alternativeName>
</protein>
<feature type="chain" id="PRO_1000116188" description="Argininosuccinate synthase">
    <location>
        <begin position="1"/>
        <end position="401"/>
    </location>
</feature>
<feature type="binding site" evidence="1">
    <location>
        <begin position="9"/>
        <end position="17"/>
    </location>
    <ligand>
        <name>ATP</name>
        <dbReference type="ChEBI" id="CHEBI:30616"/>
    </ligand>
</feature>
<feature type="binding site" evidence="1">
    <location>
        <position position="86"/>
    </location>
    <ligand>
        <name>L-citrulline</name>
        <dbReference type="ChEBI" id="CHEBI:57743"/>
    </ligand>
</feature>
<feature type="binding site" evidence="1">
    <location>
        <position position="116"/>
    </location>
    <ligand>
        <name>ATP</name>
        <dbReference type="ChEBI" id="CHEBI:30616"/>
    </ligand>
</feature>
<feature type="binding site" evidence="1">
    <location>
        <position position="118"/>
    </location>
    <ligand>
        <name>L-aspartate</name>
        <dbReference type="ChEBI" id="CHEBI:29991"/>
    </ligand>
</feature>
<feature type="binding site" evidence="1">
    <location>
        <position position="122"/>
    </location>
    <ligand>
        <name>L-aspartate</name>
        <dbReference type="ChEBI" id="CHEBI:29991"/>
    </ligand>
</feature>
<feature type="binding site" evidence="1">
    <location>
        <position position="122"/>
    </location>
    <ligand>
        <name>L-citrulline</name>
        <dbReference type="ChEBI" id="CHEBI:57743"/>
    </ligand>
</feature>
<feature type="binding site" evidence="1">
    <location>
        <position position="123"/>
    </location>
    <ligand>
        <name>L-aspartate</name>
        <dbReference type="ChEBI" id="CHEBI:29991"/>
    </ligand>
</feature>
<feature type="binding site" evidence="1">
    <location>
        <position position="126"/>
    </location>
    <ligand>
        <name>L-citrulline</name>
        <dbReference type="ChEBI" id="CHEBI:57743"/>
    </ligand>
</feature>
<feature type="binding site" evidence="1">
    <location>
        <position position="174"/>
    </location>
    <ligand>
        <name>L-citrulline</name>
        <dbReference type="ChEBI" id="CHEBI:57743"/>
    </ligand>
</feature>
<feature type="binding site" evidence="1">
    <location>
        <position position="183"/>
    </location>
    <ligand>
        <name>L-citrulline</name>
        <dbReference type="ChEBI" id="CHEBI:57743"/>
    </ligand>
</feature>
<feature type="binding site" evidence="1">
    <location>
        <position position="259"/>
    </location>
    <ligand>
        <name>L-citrulline</name>
        <dbReference type="ChEBI" id="CHEBI:57743"/>
    </ligand>
</feature>
<feature type="binding site" evidence="1">
    <location>
        <position position="271"/>
    </location>
    <ligand>
        <name>L-citrulline</name>
        <dbReference type="ChEBI" id="CHEBI:57743"/>
    </ligand>
</feature>
<reference key="1">
    <citation type="submission" date="2008-10" db="EMBL/GenBank/DDBJ databases">
        <title>Genome sequence of Bacillus cereus AH187.</title>
        <authorList>
            <person name="Dodson R.J."/>
            <person name="Durkin A.S."/>
            <person name="Rosovitz M.J."/>
            <person name="Rasko D.A."/>
            <person name="Kolsto A.B."/>
            <person name="Okstad O.A."/>
            <person name="Ravel J."/>
            <person name="Sutton G."/>
        </authorList>
    </citation>
    <scope>NUCLEOTIDE SEQUENCE [LARGE SCALE GENOMIC DNA]</scope>
    <source>
        <strain>AH187</strain>
    </source>
</reference>
<name>ASSY_BACC7</name>